<accession>Q9LNJ3</accession>
<accession>Q8L9B9</accession>
<name>APF2_ARATH</name>
<protein>
    <recommendedName>
        <fullName evidence="6">Aspartyl protease family protein 2</fullName>
        <ecNumber evidence="6">3.4.23.-</ecNumber>
    </recommendedName>
</protein>
<organism>
    <name type="scientific">Arabidopsis thaliana</name>
    <name type="common">Mouse-ear cress</name>
    <dbReference type="NCBI Taxonomy" id="3702"/>
    <lineage>
        <taxon>Eukaryota</taxon>
        <taxon>Viridiplantae</taxon>
        <taxon>Streptophyta</taxon>
        <taxon>Embryophyta</taxon>
        <taxon>Tracheophyta</taxon>
        <taxon>Spermatophyta</taxon>
        <taxon>Magnoliopsida</taxon>
        <taxon>eudicotyledons</taxon>
        <taxon>Gunneridae</taxon>
        <taxon>Pentapetalae</taxon>
        <taxon>rosids</taxon>
        <taxon>malvids</taxon>
        <taxon>Brassicales</taxon>
        <taxon>Brassicaceae</taxon>
        <taxon>Camelineae</taxon>
        <taxon>Arabidopsis</taxon>
    </lineage>
</organism>
<gene>
    <name evidence="6" type="primary">APF2</name>
    <name evidence="7" type="ordered locus">At1g01300</name>
    <name evidence="8" type="ORF">F6F3.10</name>
</gene>
<keyword id="KW-0378">Hydrolase</keyword>
<keyword id="KW-0645">Protease</keyword>
<keyword id="KW-1185">Reference proteome</keyword>
<keyword id="KW-0732">Signal</keyword>
<comment type="function">
    <text evidence="5">Aspartyl protease. Not able to cleave BAG6.</text>
</comment>
<comment type="similarity">
    <text evidence="6">Belongs to the peptidase A1 family.</text>
</comment>
<proteinExistence type="evidence at transcript level"/>
<evidence type="ECO:0000255" key="1"/>
<evidence type="ECO:0000255" key="2">
    <source>
        <dbReference type="PROSITE-ProRule" id="PRU01103"/>
    </source>
</evidence>
<evidence type="ECO:0000255" key="3">
    <source>
        <dbReference type="PROSITE-ProRule" id="PRU10094"/>
    </source>
</evidence>
<evidence type="ECO:0000256" key="4">
    <source>
        <dbReference type="SAM" id="MobiDB-lite"/>
    </source>
</evidence>
<evidence type="ECO:0000269" key="5">
    <source>
    </source>
</evidence>
<evidence type="ECO:0000305" key="6"/>
<evidence type="ECO:0000312" key="7">
    <source>
        <dbReference type="Araport" id="AT1G01300"/>
    </source>
</evidence>
<evidence type="ECO:0000312" key="8">
    <source>
        <dbReference type="EMBL" id="AAF97328.1"/>
    </source>
</evidence>
<sequence length="485" mass="52175">MVGRRKALLFSLCFFFLSLPSFSSLPSFQTLFPNSHSLPCASPVSFQPDSDSESLLESEFESGSDSESSSSITLNLDHIDALSSNKTPDELFSSRLQRDSRRVKSIATLAAQIPGRNVTHAPRPGGFSSSVVSGLSQGSGEYFTRLGVGTPARYVYMVLDTGSDIVWLQCAPCRRCYSQSDPIFDPRKSKTYATIPCSSPHCRRLDSAGCNTRRKTCLYQVSYGDGSFTVGDFSTETLTFRRNRVKGVALGCGHDNEGLFVGAAGLLGLGKGKLSFPGQTGHRFNQKFSYCLVDRSASSKPSSVVFGNAAVSRIARFTPLLSNPKLDTFYYVGLLGISVGGTRVPGVTASLFKLDQIGNGGVIIDSGTSVTRLIRPAYIAMRDAFRVGAKTLKRAPDFSLFDTCFDLSNMNEVKVPTVVLHFRGADVSLPATNYLIPVDTNGKFCFAFAGTMGGLSIIGNIQQQGFRVVYDLASSRVGFAPGGCA</sequence>
<reference key="1">
    <citation type="journal article" date="2000" name="Nature">
        <title>Sequence and analysis of chromosome 1 of the plant Arabidopsis thaliana.</title>
        <authorList>
            <person name="Theologis A."/>
            <person name="Ecker J.R."/>
            <person name="Palm C.J."/>
            <person name="Federspiel N.A."/>
            <person name="Kaul S."/>
            <person name="White O."/>
            <person name="Alonso J."/>
            <person name="Altafi H."/>
            <person name="Araujo R."/>
            <person name="Bowman C.L."/>
            <person name="Brooks S.Y."/>
            <person name="Buehler E."/>
            <person name="Chan A."/>
            <person name="Chao Q."/>
            <person name="Chen H."/>
            <person name="Cheuk R.F."/>
            <person name="Chin C.W."/>
            <person name="Chung M.K."/>
            <person name="Conn L."/>
            <person name="Conway A.B."/>
            <person name="Conway A.R."/>
            <person name="Creasy T.H."/>
            <person name="Dewar K."/>
            <person name="Dunn P."/>
            <person name="Etgu P."/>
            <person name="Feldblyum T.V."/>
            <person name="Feng J.-D."/>
            <person name="Fong B."/>
            <person name="Fujii C.Y."/>
            <person name="Gill J.E."/>
            <person name="Goldsmith A.D."/>
            <person name="Haas B."/>
            <person name="Hansen N.F."/>
            <person name="Hughes B."/>
            <person name="Huizar L."/>
            <person name="Hunter J.L."/>
            <person name="Jenkins J."/>
            <person name="Johnson-Hopson C."/>
            <person name="Khan S."/>
            <person name="Khaykin E."/>
            <person name="Kim C.J."/>
            <person name="Koo H.L."/>
            <person name="Kremenetskaia I."/>
            <person name="Kurtz D.B."/>
            <person name="Kwan A."/>
            <person name="Lam B."/>
            <person name="Langin-Hooper S."/>
            <person name="Lee A."/>
            <person name="Lee J.M."/>
            <person name="Lenz C.A."/>
            <person name="Li J.H."/>
            <person name="Li Y.-P."/>
            <person name="Lin X."/>
            <person name="Liu S.X."/>
            <person name="Liu Z.A."/>
            <person name="Luros J.S."/>
            <person name="Maiti R."/>
            <person name="Marziali A."/>
            <person name="Militscher J."/>
            <person name="Miranda M."/>
            <person name="Nguyen M."/>
            <person name="Nierman W.C."/>
            <person name="Osborne B.I."/>
            <person name="Pai G."/>
            <person name="Peterson J."/>
            <person name="Pham P.K."/>
            <person name="Rizzo M."/>
            <person name="Rooney T."/>
            <person name="Rowley D."/>
            <person name="Sakano H."/>
            <person name="Salzberg S.L."/>
            <person name="Schwartz J.R."/>
            <person name="Shinn P."/>
            <person name="Southwick A.M."/>
            <person name="Sun H."/>
            <person name="Tallon L.J."/>
            <person name="Tambunga G."/>
            <person name="Toriumi M.J."/>
            <person name="Town C.D."/>
            <person name="Utterback T."/>
            <person name="Van Aken S."/>
            <person name="Vaysberg M."/>
            <person name="Vysotskaia V.S."/>
            <person name="Walker M."/>
            <person name="Wu D."/>
            <person name="Yu G."/>
            <person name="Fraser C.M."/>
            <person name="Venter J.C."/>
            <person name="Davis R.W."/>
        </authorList>
    </citation>
    <scope>NUCLEOTIDE SEQUENCE [LARGE SCALE GENOMIC DNA]</scope>
    <source>
        <strain>cv. Columbia</strain>
    </source>
</reference>
<reference key="2">
    <citation type="journal article" date="2017" name="Plant J.">
        <title>Araport11: a complete reannotation of the Arabidopsis thaliana reference genome.</title>
        <authorList>
            <person name="Cheng C.Y."/>
            <person name="Krishnakumar V."/>
            <person name="Chan A.P."/>
            <person name="Thibaud-Nissen F."/>
            <person name="Schobel S."/>
            <person name="Town C.D."/>
        </authorList>
    </citation>
    <scope>GENOME REANNOTATION</scope>
    <source>
        <strain>cv. Columbia</strain>
    </source>
</reference>
<reference key="3">
    <citation type="journal article" date="2003" name="Science">
        <title>Empirical analysis of transcriptional activity in the Arabidopsis genome.</title>
        <authorList>
            <person name="Yamada K."/>
            <person name="Lim J."/>
            <person name="Dale J.M."/>
            <person name="Chen H."/>
            <person name="Shinn P."/>
            <person name="Palm C.J."/>
            <person name="Southwick A.M."/>
            <person name="Wu H.C."/>
            <person name="Kim C.J."/>
            <person name="Nguyen M."/>
            <person name="Pham P.K."/>
            <person name="Cheuk R.F."/>
            <person name="Karlin-Newmann G."/>
            <person name="Liu S.X."/>
            <person name="Lam B."/>
            <person name="Sakano H."/>
            <person name="Wu T."/>
            <person name="Yu G."/>
            <person name="Miranda M."/>
            <person name="Quach H.L."/>
            <person name="Tripp M."/>
            <person name="Chang C.H."/>
            <person name="Lee J.M."/>
            <person name="Toriumi M.J."/>
            <person name="Chan M.M."/>
            <person name="Tang C.C."/>
            <person name="Onodera C.S."/>
            <person name="Deng J.M."/>
            <person name="Akiyama K."/>
            <person name="Ansari Y."/>
            <person name="Arakawa T."/>
            <person name="Banh J."/>
            <person name="Banno F."/>
            <person name="Bowser L."/>
            <person name="Brooks S.Y."/>
            <person name="Carninci P."/>
            <person name="Chao Q."/>
            <person name="Choy N."/>
            <person name="Enju A."/>
            <person name="Goldsmith A.D."/>
            <person name="Gurjal M."/>
            <person name="Hansen N.F."/>
            <person name="Hayashizaki Y."/>
            <person name="Johnson-Hopson C."/>
            <person name="Hsuan V.W."/>
            <person name="Iida K."/>
            <person name="Karnes M."/>
            <person name="Khan S."/>
            <person name="Koesema E."/>
            <person name="Ishida J."/>
            <person name="Jiang P.X."/>
            <person name="Jones T."/>
            <person name="Kawai J."/>
            <person name="Kamiya A."/>
            <person name="Meyers C."/>
            <person name="Nakajima M."/>
            <person name="Narusaka M."/>
            <person name="Seki M."/>
            <person name="Sakurai T."/>
            <person name="Satou M."/>
            <person name="Tamse R."/>
            <person name="Vaysberg M."/>
            <person name="Wallender E.K."/>
            <person name="Wong C."/>
            <person name="Yamamura Y."/>
            <person name="Yuan S."/>
            <person name="Shinozaki K."/>
            <person name="Davis R.W."/>
            <person name="Theologis A."/>
            <person name="Ecker J.R."/>
        </authorList>
    </citation>
    <scope>NUCLEOTIDE SEQUENCE [LARGE SCALE MRNA]</scope>
    <source>
        <strain>cv. Columbia</strain>
    </source>
</reference>
<reference key="4">
    <citation type="submission" date="2002-03" db="EMBL/GenBank/DDBJ databases">
        <title>Full-length cDNA from Arabidopsis thaliana.</title>
        <authorList>
            <person name="Brover V.V."/>
            <person name="Troukhan M.E."/>
            <person name="Alexandrov N.A."/>
            <person name="Lu Y.-P."/>
            <person name="Flavell R.B."/>
            <person name="Feldmann K.A."/>
        </authorList>
    </citation>
    <scope>NUCLEOTIDE SEQUENCE [LARGE SCALE MRNA]</scope>
</reference>
<reference key="5">
    <citation type="journal article" date="2005" name="Curr. Protein Pept. Sci.">
        <title>Aspartic proteinase content of the Arabidopsis genome.</title>
        <authorList>
            <person name="Faro C."/>
            <person name="Gal S."/>
        </authorList>
    </citation>
    <scope>GENE FAMILY</scope>
</reference>
<reference key="6">
    <citation type="journal article" date="2016" name="Plant Cell">
        <title>Aspartyl protease-mediated cleavage of BAG6 is necessary for autophagy and fungal resistance in plants.</title>
        <authorList>
            <person name="Li Y."/>
            <person name="Kabbage M."/>
            <person name="Liu W."/>
            <person name="Dickman M.B."/>
        </authorList>
    </citation>
    <scope>FUNCTION</scope>
</reference>
<feature type="signal peptide" evidence="1">
    <location>
        <begin position="1"/>
        <end position="23"/>
    </location>
</feature>
<feature type="chain" id="PRO_5005943290" description="Aspartyl protease family protein 2" evidence="1">
    <location>
        <begin position="24"/>
        <end position="485"/>
    </location>
</feature>
<feature type="domain" description="Peptidase A1" evidence="2">
    <location>
        <begin position="142"/>
        <end position="480"/>
    </location>
</feature>
<feature type="region of interest" description="Disordered" evidence="4">
    <location>
        <begin position="43"/>
        <end position="71"/>
    </location>
</feature>
<feature type="compositionally biased region" description="Acidic residues" evidence="4">
    <location>
        <begin position="50"/>
        <end position="64"/>
    </location>
</feature>
<feature type="active site" evidence="3">
    <location>
        <position position="160"/>
    </location>
</feature>
<feature type="active site" evidence="3">
    <location>
        <position position="365"/>
    </location>
</feature>
<feature type="sequence conflict" description="In Ref. 4; AAM66061." evidence="6" ref="4">
    <original>D</original>
    <variation>Q</variation>
    <location>
        <position position="89"/>
    </location>
</feature>
<feature type="sequence conflict" description="In Ref. 4; AAM66061." evidence="6" ref="4">
    <original>K</original>
    <variation>R</variation>
    <location>
        <position position="104"/>
    </location>
</feature>
<feature type="sequence conflict" description="In Ref. 4; AAM66061." evidence="6" ref="4">
    <original>D</original>
    <variation>N</variation>
    <location>
        <position position="397"/>
    </location>
</feature>
<feature type="sequence conflict" description="In Ref. 4; AAM66061." evidence="6" ref="4">
    <original>G</original>
    <variation>R</variation>
    <location>
        <position position="424"/>
    </location>
</feature>
<dbReference type="EC" id="3.4.23.-" evidence="6"/>
<dbReference type="EMBL" id="AC023628">
    <property type="protein sequence ID" value="AAF97328.1"/>
    <property type="molecule type" value="Genomic_DNA"/>
</dbReference>
<dbReference type="EMBL" id="CP002684">
    <property type="protein sequence ID" value="AEE27268.1"/>
    <property type="molecule type" value="Genomic_DNA"/>
</dbReference>
<dbReference type="EMBL" id="AY128344">
    <property type="protein sequence ID" value="AAM91547.1"/>
    <property type="molecule type" value="mRNA"/>
</dbReference>
<dbReference type="EMBL" id="BT006619">
    <property type="protein sequence ID" value="AAP31963.1"/>
    <property type="molecule type" value="mRNA"/>
</dbReference>
<dbReference type="EMBL" id="AY088528">
    <property type="protein sequence ID" value="AAM66061.1"/>
    <property type="molecule type" value="mRNA"/>
</dbReference>
<dbReference type="PIR" id="C86143">
    <property type="entry name" value="C86143"/>
</dbReference>
<dbReference type="RefSeq" id="NP_171637.1">
    <property type="nucleotide sequence ID" value="NM_100012.3"/>
</dbReference>
<dbReference type="SMR" id="Q9LNJ3"/>
<dbReference type="FunCoup" id="Q9LNJ3">
    <property type="interactions" value="111"/>
</dbReference>
<dbReference type="IntAct" id="Q9LNJ3">
    <property type="interactions" value="3"/>
</dbReference>
<dbReference type="STRING" id="3702.Q9LNJ3"/>
<dbReference type="MEROPS" id="A01.A05"/>
<dbReference type="iPTMnet" id="Q9LNJ3"/>
<dbReference type="MetOSite" id="Q9LNJ3"/>
<dbReference type="SwissPalm" id="Q9LNJ3"/>
<dbReference type="PaxDb" id="3702-AT1G01300.1"/>
<dbReference type="ProteomicsDB" id="246776"/>
<dbReference type="EnsemblPlants" id="AT1G01300.1">
    <property type="protein sequence ID" value="AT1G01300.1"/>
    <property type="gene ID" value="AT1G01300"/>
</dbReference>
<dbReference type="GeneID" id="839375"/>
<dbReference type="Gramene" id="AT1G01300.1">
    <property type="protein sequence ID" value="AT1G01300.1"/>
    <property type="gene ID" value="AT1G01300"/>
</dbReference>
<dbReference type="KEGG" id="ath:AT1G01300"/>
<dbReference type="Araport" id="AT1G01300"/>
<dbReference type="TAIR" id="AT1G01300"/>
<dbReference type="eggNOG" id="KOG1339">
    <property type="taxonomic scope" value="Eukaryota"/>
</dbReference>
<dbReference type="HOGENOM" id="CLU_005738_5_0_1"/>
<dbReference type="InParanoid" id="Q9LNJ3"/>
<dbReference type="OMA" id="HRFNQKF"/>
<dbReference type="PhylomeDB" id="Q9LNJ3"/>
<dbReference type="CD-CODE" id="4299E36E">
    <property type="entry name" value="Nucleolus"/>
</dbReference>
<dbReference type="PRO" id="PR:Q9LNJ3"/>
<dbReference type="Proteomes" id="UP000006548">
    <property type="component" value="Chromosome 1"/>
</dbReference>
<dbReference type="ExpressionAtlas" id="Q9LNJ3">
    <property type="expression patterns" value="baseline and differential"/>
</dbReference>
<dbReference type="GO" id="GO:0009505">
    <property type="term" value="C:plant-type cell wall"/>
    <property type="evidence" value="ECO:0007005"/>
    <property type="project" value="TAIR"/>
</dbReference>
<dbReference type="GO" id="GO:0004190">
    <property type="term" value="F:aspartic-type endopeptidase activity"/>
    <property type="evidence" value="ECO:0007669"/>
    <property type="project" value="InterPro"/>
</dbReference>
<dbReference type="GO" id="GO:0006508">
    <property type="term" value="P:proteolysis"/>
    <property type="evidence" value="ECO:0007669"/>
    <property type="project" value="UniProtKB-KW"/>
</dbReference>
<dbReference type="CDD" id="cd05472">
    <property type="entry name" value="cnd41_like"/>
    <property type="match status" value="1"/>
</dbReference>
<dbReference type="FunFam" id="2.40.70.10:FF:000010">
    <property type="entry name" value="Aspartyl protease family protein 2"/>
    <property type="match status" value="1"/>
</dbReference>
<dbReference type="FunFam" id="2.40.70.10:FF:000019">
    <property type="entry name" value="aspartyl protease family protein 2"/>
    <property type="match status" value="1"/>
</dbReference>
<dbReference type="Gene3D" id="2.40.70.10">
    <property type="entry name" value="Acid Proteases"/>
    <property type="match status" value="2"/>
</dbReference>
<dbReference type="InterPro" id="IPR001461">
    <property type="entry name" value="Aspartic_peptidase_A1"/>
</dbReference>
<dbReference type="InterPro" id="IPR033873">
    <property type="entry name" value="CND41-like"/>
</dbReference>
<dbReference type="InterPro" id="IPR033121">
    <property type="entry name" value="PEPTIDASE_A1"/>
</dbReference>
<dbReference type="InterPro" id="IPR021109">
    <property type="entry name" value="Peptidase_aspartic_dom_sf"/>
</dbReference>
<dbReference type="InterPro" id="IPR051708">
    <property type="entry name" value="Plant_Aspart_Prot_A1"/>
</dbReference>
<dbReference type="InterPro" id="IPR032799">
    <property type="entry name" value="TAXi_C"/>
</dbReference>
<dbReference type="InterPro" id="IPR032861">
    <property type="entry name" value="TAXi_N"/>
</dbReference>
<dbReference type="PANTHER" id="PTHR47967">
    <property type="entry name" value="OS07G0603500 PROTEIN-RELATED"/>
    <property type="match status" value="1"/>
</dbReference>
<dbReference type="PANTHER" id="PTHR47967:SF60">
    <property type="entry name" value="PROTEIN ASPARTIC PROTEASE IN GUARD CELL 1-LIKE"/>
    <property type="match status" value="1"/>
</dbReference>
<dbReference type="Pfam" id="PF14541">
    <property type="entry name" value="TAXi_C"/>
    <property type="match status" value="1"/>
</dbReference>
<dbReference type="Pfam" id="PF14543">
    <property type="entry name" value="TAXi_N"/>
    <property type="match status" value="1"/>
</dbReference>
<dbReference type="PRINTS" id="PR00792">
    <property type="entry name" value="PEPSIN"/>
</dbReference>
<dbReference type="SUPFAM" id="SSF50630">
    <property type="entry name" value="Acid proteases"/>
    <property type="match status" value="1"/>
</dbReference>
<dbReference type="PROSITE" id="PS00141">
    <property type="entry name" value="ASP_PROTEASE"/>
    <property type="match status" value="2"/>
</dbReference>
<dbReference type="PROSITE" id="PS51767">
    <property type="entry name" value="PEPTIDASE_A1"/>
    <property type="match status" value="1"/>
</dbReference>